<evidence type="ECO:0000250" key="1"/>
<evidence type="ECO:0000255" key="2"/>
<evidence type="ECO:0000256" key="3">
    <source>
        <dbReference type="SAM" id="MobiDB-lite"/>
    </source>
</evidence>
<evidence type="ECO:0000305" key="4"/>
<gene>
    <name type="primary">Tmem102</name>
</gene>
<proteinExistence type="evidence at protein level"/>
<name>TM102_MOUSE</name>
<dbReference type="EMBL" id="AK143262">
    <property type="protein sequence ID" value="BAE25328.1"/>
    <property type="molecule type" value="mRNA"/>
</dbReference>
<dbReference type="EMBL" id="AL603707">
    <property type="status" value="NOT_ANNOTATED_CDS"/>
    <property type="molecule type" value="Genomic_DNA"/>
</dbReference>
<dbReference type="CCDS" id="CCDS36198.1"/>
<dbReference type="RefSeq" id="NP_001028605.2">
    <property type="nucleotide sequence ID" value="NM_001033433.4"/>
</dbReference>
<dbReference type="SMR" id="Q3UPR7"/>
<dbReference type="FunCoup" id="Q3UPR7">
    <property type="interactions" value="12"/>
</dbReference>
<dbReference type="IntAct" id="Q3UPR7">
    <property type="interactions" value="1"/>
</dbReference>
<dbReference type="STRING" id="10090.ENSMUSP00000132164"/>
<dbReference type="iPTMnet" id="Q3UPR7"/>
<dbReference type="PhosphoSitePlus" id="Q3UPR7"/>
<dbReference type="PaxDb" id="10090-ENSMUSP00000132164"/>
<dbReference type="ProteomicsDB" id="258898"/>
<dbReference type="Antibodypedia" id="11967">
    <property type="antibodies" value="81 antibodies from 19 providers"/>
</dbReference>
<dbReference type="Ensembl" id="ENSMUST00000051025.5">
    <property type="protein sequence ID" value="ENSMUSP00000132164.3"/>
    <property type="gene ID" value="ENSMUSG00000089876.4"/>
</dbReference>
<dbReference type="GeneID" id="380705"/>
<dbReference type="KEGG" id="mmu:380705"/>
<dbReference type="UCSC" id="uc007jrs.2">
    <property type="organism name" value="mouse"/>
</dbReference>
<dbReference type="AGR" id="MGI:1921591"/>
<dbReference type="CTD" id="284114"/>
<dbReference type="MGI" id="MGI:1921591">
    <property type="gene designation" value="Tmem102"/>
</dbReference>
<dbReference type="VEuPathDB" id="HostDB:ENSMUSG00000089876"/>
<dbReference type="eggNOG" id="KOG3963">
    <property type="taxonomic scope" value="Eukaryota"/>
</dbReference>
<dbReference type="GeneTree" id="ENSGT01050000244976"/>
<dbReference type="HOGENOM" id="CLU_041150_0_0_1"/>
<dbReference type="InParanoid" id="Q3UPR7"/>
<dbReference type="OMA" id="GAPWWGP"/>
<dbReference type="OrthoDB" id="269173at2759"/>
<dbReference type="PhylomeDB" id="Q3UPR7"/>
<dbReference type="TreeFam" id="TF329089"/>
<dbReference type="BioGRID-ORCS" id="380705">
    <property type="hits" value="2 hits in 77 CRISPR screens"/>
</dbReference>
<dbReference type="PRO" id="PR:Q3UPR7"/>
<dbReference type="Proteomes" id="UP000000589">
    <property type="component" value="Chromosome 11"/>
</dbReference>
<dbReference type="RNAct" id="Q3UPR7">
    <property type="molecule type" value="protein"/>
</dbReference>
<dbReference type="Bgee" id="ENSMUSG00000089876">
    <property type="expression patterns" value="Expressed in lip and 51 other cell types or tissues"/>
</dbReference>
<dbReference type="GO" id="GO:0009986">
    <property type="term" value="C:cell surface"/>
    <property type="evidence" value="ECO:0007669"/>
    <property type="project" value="Ensembl"/>
</dbReference>
<dbReference type="GO" id="GO:0005739">
    <property type="term" value="C:mitochondrion"/>
    <property type="evidence" value="ECO:0007669"/>
    <property type="project" value="GOC"/>
</dbReference>
<dbReference type="GO" id="GO:0005886">
    <property type="term" value="C:plasma membrane"/>
    <property type="evidence" value="ECO:0007669"/>
    <property type="project" value="UniProtKB-SubCell"/>
</dbReference>
<dbReference type="GO" id="GO:0032991">
    <property type="term" value="C:protein-containing complex"/>
    <property type="evidence" value="ECO:0000266"/>
    <property type="project" value="MGI"/>
</dbReference>
<dbReference type="GO" id="GO:0006915">
    <property type="term" value="P:apoptotic process"/>
    <property type="evidence" value="ECO:0007669"/>
    <property type="project" value="UniProtKB-KW"/>
</dbReference>
<dbReference type="GO" id="GO:0045785">
    <property type="term" value="P:positive regulation of cell adhesion"/>
    <property type="evidence" value="ECO:0000314"/>
    <property type="project" value="MGI"/>
</dbReference>
<dbReference type="GO" id="GO:0010820">
    <property type="term" value="P:positive regulation of T cell chemotaxis"/>
    <property type="evidence" value="ECO:0000315"/>
    <property type="project" value="MGI"/>
</dbReference>
<dbReference type="GO" id="GO:2000406">
    <property type="term" value="P:positive regulation of T cell migration"/>
    <property type="evidence" value="ECO:0000314"/>
    <property type="project" value="MGI"/>
</dbReference>
<dbReference type="GO" id="GO:1901028">
    <property type="term" value="P:regulation of mitochondrial outer membrane permeabilization involved in apoptotic signaling pathway"/>
    <property type="evidence" value="ECO:0007669"/>
    <property type="project" value="Ensembl"/>
</dbReference>
<dbReference type="GO" id="GO:0034097">
    <property type="term" value="P:response to cytokine"/>
    <property type="evidence" value="ECO:0007669"/>
    <property type="project" value="Ensembl"/>
</dbReference>
<dbReference type="GO" id="GO:0007165">
    <property type="term" value="P:signal transduction"/>
    <property type="evidence" value="ECO:0007669"/>
    <property type="project" value="Ensembl"/>
</dbReference>
<dbReference type="FunFam" id="1.10.1410.40:FF:000009">
    <property type="entry name" value="Transmembrane protein 102"/>
    <property type="match status" value="1"/>
</dbReference>
<dbReference type="Gene3D" id="1.10.1410.40">
    <property type="match status" value="1"/>
</dbReference>
<dbReference type="InterPro" id="IPR024810">
    <property type="entry name" value="MAB21L/cGLR"/>
</dbReference>
<dbReference type="PANTHER" id="PTHR10656">
    <property type="entry name" value="CELL FATE DETERMINING PROTEIN MAB21-RELATED"/>
    <property type="match status" value="1"/>
</dbReference>
<dbReference type="PANTHER" id="PTHR10656:SF48">
    <property type="entry name" value="TRANSMEMBRANE PROTEIN 102"/>
    <property type="match status" value="1"/>
</dbReference>
<dbReference type="SMART" id="SM01265">
    <property type="entry name" value="Mab-21"/>
    <property type="match status" value="1"/>
</dbReference>
<comment type="function">
    <text evidence="1">Selectively involved in CSF2 deprivation-induced apoptosis via a mitochondria-dependent pathway.</text>
</comment>
<comment type="subunit">
    <text evidence="1">Interacts with CSF2RB; this interaction occurs preferentially in the absence of CSF2.</text>
</comment>
<comment type="subcellular location">
    <subcellularLocation>
        <location evidence="1">Cell membrane</location>
        <topology evidence="1">Single-pass membrane protein</topology>
    </subcellularLocation>
    <text evidence="1">Also located in intracellular compartments.</text>
</comment>
<feature type="chain" id="PRO_0000263649" description="Transmembrane protein 102">
    <location>
        <begin position="1"/>
        <end position="509"/>
    </location>
</feature>
<feature type="topological domain" description="Extracellular" evidence="2">
    <location>
        <begin position="1"/>
        <end position="312"/>
    </location>
</feature>
<feature type="transmembrane region" description="Helical" evidence="2">
    <location>
        <begin position="313"/>
        <end position="329"/>
    </location>
</feature>
<feature type="topological domain" description="Cytoplasmic" evidence="2">
    <location>
        <begin position="330"/>
        <end position="509"/>
    </location>
</feature>
<feature type="region of interest" description="Disordered" evidence="3">
    <location>
        <begin position="167"/>
        <end position="236"/>
    </location>
</feature>
<feature type="compositionally biased region" description="Basic and acidic residues" evidence="3">
    <location>
        <begin position="174"/>
        <end position="204"/>
    </location>
</feature>
<feature type="compositionally biased region" description="Low complexity" evidence="3">
    <location>
        <begin position="207"/>
        <end position="224"/>
    </location>
</feature>
<feature type="sequence conflict" description="In Ref. 1; BAE25328." evidence="4" ref="1">
    <original>K</original>
    <variation>E</variation>
    <location>
        <position position="64"/>
    </location>
</feature>
<feature type="sequence conflict" description="In Ref. 1; BAE25328." evidence="4" ref="1">
    <original>L</original>
    <variation>V</variation>
    <location>
        <position position="88"/>
    </location>
</feature>
<sequence length="509" mass="54923">MASTVWGGAPWWGPPPPAPARPLTDIDFCSGAQLQELTQLIQELRVQESWSEGPKPGADLLRAKDFVFALLGLVHRQDPRFPPQAELLLLRGGIREGSLDLGHAPLGPYSRGPHYDAGFTLLVPVFSLDGTGPELLLDLESCSAWLRLPELMRGILVREAWQDCLGPPVPEESDMTHQTHSKESPTDRENSVDPSHDYVPEPEPHMSLQKSSSDLSESQSSYKDITNPETPEPLETLSSDALDADESQVPKPSEAPKAWPTLCPTQVTSWFFVKLAEVAESLIPVPGAPRLVHAARHAGVTTVLLATPEPPRHLLLFDLIPVVTVTGWPDTARSHSWAGPLVSESASFYLVPGSLPEQPSTSGWQLCFARQELALKERIPTPLLQAHAAAQALLRPLVAGTRAAAPYLLRTLLYWACERLPALYLARPENAGACCLGLLDELSRVLEAGALPHYFLSGRKLRVGDGSAALRGALAQLRGDPAQALREAVEEAKVARKGGGLAGVGGGTH</sequence>
<accession>Q3UPR7</accession>
<accession>E9Q2B4</accession>
<protein>
    <recommendedName>
        <fullName>Transmembrane protein 102</fullName>
    </recommendedName>
</protein>
<keyword id="KW-0053">Apoptosis</keyword>
<keyword id="KW-1003">Cell membrane</keyword>
<keyword id="KW-0472">Membrane</keyword>
<keyword id="KW-1185">Reference proteome</keyword>
<keyword id="KW-0812">Transmembrane</keyword>
<keyword id="KW-1133">Transmembrane helix</keyword>
<reference key="1">
    <citation type="journal article" date="2005" name="Science">
        <title>The transcriptional landscape of the mammalian genome.</title>
        <authorList>
            <person name="Carninci P."/>
            <person name="Kasukawa T."/>
            <person name="Katayama S."/>
            <person name="Gough J."/>
            <person name="Frith M.C."/>
            <person name="Maeda N."/>
            <person name="Oyama R."/>
            <person name="Ravasi T."/>
            <person name="Lenhard B."/>
            <person name="Wells C."/>
            <person name="Kodzius R."/>
            <person name="Shimokawa K."/>
            <person name="Bajic V.B."/>
            <person name="Brenner S.E."/>
            <person name="Batalov S."/>
            <person name="Forrest A.R."/>
            <person name="Zavolan M."/>
            <person name="Davis M.J."/>
            <person name="Wilming L.G."/>
            <person name="Aidinis V."/>
            <person name="Allen J.E."/>
            <person name="Ambesi-Impiombato A."/>
            <person name="Apweiler R."/>
            <person name="Aturaliya R.N."/>
            <person name="Bailey T.L."/>
            <person name="Bansal M."/>
            <person name="Baxter L."/>
            <person name="Beisel K.W."/>
            <person name="Bersano T."/>
            <person name="Bono H."/>
            <person name="Chalk A.M."/>
            <person name="Chiu K.P."/>
            <person name="Choudhary V."/>
            <person name="Christoffels A."/>
            <person name="Clutterbuck D.R."/>
            <person name="Crowe M.L."/>
            <person name="Dalla E."/>
            <person name="Dalrymple B.P."/>
            <person name="de Bono B."/>
            <person name="Della Gatta G."/>
            <person name="di Bernardo D."/>
            <person name="Down T."/>
            <person name="Engstrom P."/>
            <person name="Fagiolini M."/>
            <person name="Faulkner G."/>
            <person name="Fletcher C.F."/>
            <person name="Fukushima T."/>
            <person name="Furuno M."/>
            <person name="Futaki S."/>
            <person name="Gariboldi M."/>
            <person name="Georgii-Hemming P."/>
            <person name="Gingeras T.R."/>
            <person name="Gojobori T."/>
            <person name="Green R.E."/>
            <person name="Gustincich S."/>
            <person name="Harbers M."/>
            <person name="Hayashi Y."/>
            <person name="Hensch T.K."/>
            <person name="Hirokawa N."/>
            <person name="Hill D."/>
            <person name="Huminiecki L."/>
            <person name="Iacono M."/>
            <person name="Ikeo K."/>
            <person name="Iwama A."/>
            <person name="Ishikawa T."/>
            <person name="Jakt M."/>
            <person name="Kanapin A."/>
            <person name="Katoh M."/>
            <person name="Kawasawa Y."/>
            <person name="Kelso J."/>
            <person name="Kitamura H."/>
            <person name="Kitano H."/>
            <person name="Kollias G."/>
            <person name="Krishnan S.P."/>
            <person name="Kruger A."/>
            <person name="Kummerfeld S.K."/>
            <person name="Kurochkin I.V."/>
            <person name="Lareau L.F."/>
            <person name="Lazarevic D."/>
            <person name="Lipovich L."/>
            <person name="Liu J."/>
            <person name="Liuni S."/>
            <person name="McWilliam S."/>
            <person name="Madan Babu M."/>
            <person name="Madera M."/>
            <person name="Marchionni L."/>
            <person name="Matsuda H."/>
            <person name="Matsuzawa S."/>
            <person name="Miki H."/>
            <person name="Mignone F."/>
            <person name="Miyake S."/>
            <person name="Morris K."/>
            <person name="Mottagui-Tabar S."/>
            <person name="Mulder N."/>
            <person name="Nakano N."/>
            <person name="Nakauchi H."/>
            <person name="Ng P."/>
            <person name="Nilsson R."/>
            <person name="Nishiguchi S."/>
            <person name="Nishikawa S."/>
            <person name="Nori F."/>
            <person name="Ohara O."/>
            <person name="Okazaki Y."/>
            <person name="Orlando V."/>
            <person name="Pang K.C."/>
            <person name="Pavan W.J."/>
            <person name="Pavesi G."/>
            <person name="Pesole G."/>
            <person name="Petrovsky N."/>
            <person name="Piazza S."/>
            <person name="Reed J."/>
            <person name="Reid J.F."/>
            <person name="Ring B.Z."/>
            <person name="Ringwald M."/>
            <person name="Rost B."/>
            <person name="Ruan Y."/>
            <person name="Salzberg S.L."/>
            <person name="Sandelin A."/>
            <person name="Schneider C."/>
            <person name="Schoenbach C."/>
            <person name="Sekiguchi K."/>
            <person name="Semple C.A."/>
            <person name="Seno S."/>
            <person name="Sessa L."/>
            <person name="Sheng Y."/>
            <person name="Shibata Y."/>
            <person name="Shimada H."/>
            <person name="Shimada K."/>
            <person name="Silva D."/>
            <person name="Sinclair B."/>
            <person name="Sperling S."/>
            <person name="Stupka E."/>
            <person name="Sugiura K."/>
            <person name="Sultana R."/>
            <person name="Takenaka Y."/>
            <person name="Taki K."/>
            <person name="Tammoja K."/>
            <person name="Tan S.L."/>
            <person name="Tang S."/>
            <person name="Taylor M.S."/>
            <person name="Tegner J."/>
            <person name="Teichmann S.A."/>
            <person name="Ueda H.R."/>
            <person name="van Nimwegen E."/>
            <person name="Verardo R."/>
            <person name="Wei C.L."/>
            <person name="Yagi K."/>
            <person name="Yamanishi H."/>
            <person name="Zabarovsky E."/>
            <person name="Zhu S."/>
            <person name="Zimmer A."/>
            <person name="Hide W."/>
            <person name="Bult C."/>
            <person name="Grimmond S.M."/>
            <person name="Teasdale R.D."/>
            <person name="Liu E.T."/>
            <person name="Brusic V."/>
            <person name="Quackenbush J."/>
            <person name="Wahlestedt C."/>
            <person name="Mattick J.S."/>
            <person name="Hume D.A."/>
            <person name="Kai C."/>
            <person name="Sasaki D."/>
            <person name="Tomaru Y."/>
            <person name="Fukuda S."/>
            <person name="Kanamori-Katayama M."/>
            <person name="Suzuki M."/>
            <person name="Aoki J."/>
            <person name="Arakawa T."/>
            <person name="Iida J."/>
            <person name="Imamura K."/>
            <person name="Itoh M."/>
            <person name="Kato T."/>
            <person name="Kawaji H."/>
            <person name="Kawagashira N."/>
            <person name="Kawashima T."/>
            <person name="Kojima M."/>
            <person name="Kondo S."/>
            <person name="Konno H."/>
            <person name="Nakano K."/>
            <person name="Ninomiya N."/>
            <person name="Nishio T."/>
            <person name="Okada M."/>
            <person name="Plessy C."/>
            <person name="Shibata K."/>
            <person name="Shiraki T."/>
            <person name="Suzuki S."/>
            <person name="Tagami M."/>
            <person name="Waki K."/>
            <person name="Watahiki A."/>
            <person name="Okamura-Oho Y."/>
            <person name="Suzuki H."/>
            <person name="Kawai J."/>
            <person name="Hayashizaki Y."/>
        </authorList>
    </citation>
    <scope>NUCLEOTIDE SEQUENCE [LARGE SCALE MRNA]</scope>
    <source>
        <strain>C57BL/6J</strain>
        <tissue>Oviduct</tissue>
    </source>
</reference>
<reference key="2">
    <citation type="journal article" date="2009" name="PLoS Biol.">
        <title>Lineage-specific biology revealed by a finished genome assembly of the mouse.</title>
        <authorList>
            <person name="Church D.M."/>
            <person name="Goodstadt L."/>
            <person name="Hillier L.W."/>
            <person name="Zody M.C."/>
            <person name="Goldstein S."/>
            <person name="She X."/>
            <person name="Bult C.J."/>
            <person name="Agarwala R."/>
            <person name="Cherry J.L."/>
            <person name="DiCuccio M."/>
            <person name="Hlavina W."/>
            <person name="Kapustin Y."/>
            <person name="Meric P."/>
            <person name="Maglott D."/>
            <person name="Birtle Z."/>
            <person name="Marques A.C."/>
            <person name="Graves T."/>
            <person name="Zhou S."/>
            <person name="Teague B."/>
            <person name="Potamousis K."/>
            <person name="Churas C."/>
            <person name="Place M."/>
            <person name="Herschleb J."/>
            <person name="Runnheim R."/>
            <person name="Forrest D."/>
            <person name="Amos-Landgraf J."/>
            <person name="Schwartz D.C."/>
            <person name="Cheng Z."/>
            <person name="Lindblad-Toh K."/>
            <person name="Eichler E.E."/>
            <person name="Ponting C.P."/>
        </authorList>
    </citation>
    <scope>NUCLEOTIDE SEQUENCE [LARGE SCALE GENOMIC DNA]</scope>
    <source>
        <strain>C57BL/6J</strain>
    </source>
</reference>
<reference key="3">
    <citation type="journal article" date="2007" name="Proc. Natl. Acad. Sci. U.S.A.">
        <title>Large-scale phosphorylation analysis of mouse liver.</title>
        <authorList>
            <person name="Villen J."/>
            <person name="Beausoleil S.A."/>
            <person name="Gerber S.A."/>
            <person name="Gygi S.P."/>
        </authorList>
    </citation>
    <scope>IDENTIFICATION BY MASS SPECTROMETRY [LARGE SCALE ANALYSIS]</scope>
    <source>
        <tissue>Liver</tissue>
    </source>
</reference>
<reference key="4">
    <citation type="journal article" date="2010" name="Cell">
        <title>A tissue-specific atlas of mouse protein phosphorylation and expression.</title>
        <authorList>
            <person name="Huttlin E.L."/>
            <person name="Jedrychowski M.P."/>
            <person name="Elias J.E."/>
            <person name="Goswami T."/>
            <person name="Rad R."/>
            <person name="Beausoleil S.A."/>
            <person name="Villen J."/>
            <person name="Haas W."/>
            <person name="Sowa M.E."/>
            <person name="Gygi S.P."/>
        </authorList>
    </citation>
    <scope>IDENTIFICATION BY MASS SPECTROMETRY [LARGE SCALE ANALYSIS]</scope>
    <source>
        <tissue>Kidney</tissue>
    </source>
</reference>
<organism>
    <name type="scientific">Mus musculus</name>
    <name type="common">Mouse</name>
    <dbReference type="NCBI Taxonomy" id="10090"/>
    <lineage>
        <taxon>Eukaryota</taxon>
        <taxon>Metazoa</taxon>
        <taxon>Chordata</taxon>
        <taxon>Craniata</taxon>
        <taxon>Vertebrata</taxon>
        <taxon>Euteleostomi</taxon>
        <taxon>Mammalia</taxon>
        <taxon>Eutheria</taxon>
        <taxon>Euarchontoglires</taxon>
        <taxon>Glires</taxon>
        <taxon>Rodentia</taxon>
        <taxon>Myomorpha</taxon>
        <taxon>Muroidea</taxon>
        <taxon>Muridae</taxon>
        <taxon>Murinae</taxon>
        <taxon>Mus</taxon>
        <taxon>Mus</taxon>
    </lineage>
</organism>